<sequence length="957" mass="105701">MARYNPFSFTPGPVVFFTTVIYVGLFAALLVTHLTVPDYPSDPPAGINLTEAWADLEHITRRFHPYNSHANDHVREYLLSRIQGIVATKHLDGSQVEIIDDLTSNATFSSGATSVYFEGTNIIVAIRGSEDDEPFNSTDRRPNNGGVLVNAHYDSVSSGYGATDDGVGVVTVLQLLSYFTESHNWPKRTIILLLNNGEEDFLNGAKAFMRNPISRVPHTFVNLEGAGAGGRATLFRSTDTEVTRFYSKSKYPFGTVVSGDGFKKGLIRSETDYRVFHSDLGLRGLDIAFMEPRARYHTVEDSTRETSMNSLWHMLSAALASTSGLAAVTGEEFSGSESLDNGRVNAGRGSDGVWFDLFGRVFVVFQLHTLFALCVTLLVVAPITLIGLTFGLSKADKNYLLARKAFVYSSDDDNPVQLYGWRGFFRFPIIFISATAVVVALAYLLVRFNAFIIYSSPFAVWSMMLSAWFFVAWFFSRGADAMRPSALQRMYALIWLFIGSFVLLTIVTVFVNNYQVVAGYPALFYFAVVFVAIMLSYLELFFAPTKSAYARHFEHDANSRRNSDSASRPLTGSTTAARSDDRPVADDDATEITSLLRGDRRGFTRYGSRRDSASEGGEDQAQGSQRLDLGNVYPGEQEWSGKLPSWIWIIQLLLLAPLVIVLVGQVALLLTSALYQTPSDGNSPLFIYLAIAALSVLLLAPTGPFIHRFTYHVPTFLFLVCLGTVIYNLVAFPFSRDHRLKVYFVQRVNCETGANTVSLTGLDSYVQRIVGELPSAQDQPLNCTTPDVATRKELKTCEWEGLPAKVVPNAAGAAPFGNETNTGRWLEYSIHKGNRSNKATMLVVGLNTRACRIVFDSPISGLAVTGAVSDPRFKPVGAAGSREVRLWHREFGQPWNVGLTWDAEEHAKLSGRVVCLWSDANTGSIPAFDEVQHYLPVWAIPSKISDGLVEGFKRFEI</sequence>
<keyword id="KW-0325">Glycoprotein</keyword>
<keyword id="KW-0378">Hydrolase</keyword>
<keyword id="KW-0472">Membrane</keyword>
<keyword id="KW-0479">Metal-binding</keyword>
<keyword id="KW-0482">Metalloprotease</keyword>
<keyword id="KW-0645">Protease</keyword>
<keyword id="KW-1185">Reference proteome</keyword>
<keyword id="KW-0812">Transmembrane</keyword>
<keyword id="KW-1133">Transmembrane helix</keyword>
<keyword id="KW-0926">Vacuole</keyword>
<keyword id="KW-0862">Zinc</keyword>
<dbReference type="EC" id="3.4.-.-" evidence="6"/>
<dbReference type="EMBL" id="GL532751">
    <property type="protein sequence ID" value="EFQ95514.1"/>
    <property type="molecule type" value="Genomic_DNA"/>
</dbReference>
<dbReference type="RefSeq" id="XP_003296396.1">
    <property type="nucleotide sequence ID" value="XM_003296348.1"/>
</dbReference>
<dbReference type="SMR" id="E3RFJ1"/>
<dbReference type="STRING" id="861557.E3RFJ1"/>
<dbReference type="EnsemblFungi" id="EFQ95514">
    <property type="protein sequence ID" value="EFQ95514"/>
    <property type="gene ID" value="PTT_06479"/>
</dbReference>
<dbReference type="KEGG" id="pte:PTT_06479"/>
<dbReference type="eggNOG" id="KOG2194">
    <property type="taxonomic scope" value="Eukaryota"/>
</dbReference>
<dbReference type="HOGENOM" id="CLU_006412_1_0_1"/>
<dbReference type="OrthoDB" id="76293at2759"/>
<dbReference type="Proteomes" id="UP000001067">
    <property type="component" value="Unassembled WGS sequence"/>
</dbReference>
<dbReference type="GO" id="GO:0005774">
    <property type="term" value="C:vacuolar membrane"/>
    <property type="evidence" value="ECO:0007669"/>
    <property type="project" value="UniProtKB-SubCell"/>
</dbReference>
<dbReference type="GO" id="GO:0046872">
    <property type="term" value="F:metal ion binding"/>
    <property type="evidence" value="ECO:0007669"/>
    <property type="project" value="UniProtKB-KW"/>
</dbReference>
<dbReference type="GO" id="GO:0008235">
    <property type="term" value="F:metalloexopeptidase activity"/>
    <property type="evidence" value="ECO:0007669"/>
    <property type="project" value="InterPro"/>
</dbReference>
<dbReference type="GO" id="GO:0006508">
    <property type="term" value="P:proteolysis"/>
    <property type="evidence" value="ECO:0007669"/>
    <property type="project" value="UniProtKB-KW"/>
</dbReference>
<dbReference type="CDD" id="cd03875">
    <property type="entry name" value="M28_Fxna_like"/>
    <property type="match status" value="1"/>
</dbReference>
<dbReference type="FunFam" id="3.40.630.10:FF:000057">
    <property type="entry name" value="Vacuolar membrane protease"/>
    <property type="match status" value="1"/>
</dbReference>
<dbReference type="Gene3D" id="3.40.630.10">
    <property type="entry name" value="Zn peptidases"/>
    <property type="match status" value="1"/>
</dbReference>
<dbReference type="InterPro" id="IPR048024">
    <property type="entry name" value="Fxna-like_M28_dom"/>
</dbReference>
<dbReference type="InterPro" id="IPR045175">
    <property type="entry name" value="M28_fam"/>
</dbReference>
<dbReference type="InterPro" id="IPR007484">
    <property type="entry name" value="Peptidase_M28"/>
</dbReference>
<dbReference type="InterPro" id="IPR053975">
    <property type="entry name" value="PFF1_C"/>
</dbReference>
<dbReference type="InterPro" id="IPR053976">
    <property type="entry name" value="PFF1_TM"/>
</dbReference>
<dbReference type="PANTHER" id="PTHR12147">
    <property type="entry name" value="METALLOPEPTIDASE M28 FAMILY MEMBER"/>
    <property type="match status" value="1"/>
</dbReference>
<dbReference type="PANTHER" id="PTHR12147:SF58">
    <property type="entry name" value="VACUOLAR MEMBRANE PROTEASE"/>
    <property type="match status" value="1"/>
</dbReference>
<dbReference type="Pfam" id="PF04389">
    <property type="entry name" value="Peptidase_M28"/>
    <property type="match status" value="1"/>
</dbReference>
<dbReference type="Pfam" id="PF22250">
    <property type="entry name" value="PFF1_C"/>
    <property type="match status" value="1"/>
</dbReference>
<dbReference type="Pfam" id="PF22251">
    <property type="entry name" value="PFF1_TM"/>
    <property type="match status" value="1"/>
</dbReference>
<dbReference type="SUPFAM" id="SSF53187">
    <property type="entry name" value="Zn-dependent exopeptidases"/>
    <property type="match status" value="1"/>
</dbReference>
<feature type="chain" id="PRO_0000411739" description="Vacuolar membrane protease">
    <location>
        <begin position="1"/>
        <end position="957"/>
    </location>
</feature>
<feature type="topological domain" description="Cytoplasmic" evidence="1">
    <location>
        <begin position="1"/>
        <end position="10"/>
    </location>
</feature>
<feature type="transmembrane region" description="Helical; Name=1" evidence="3">
    <location>
        <begin position="11"/>
        <end position="31"/>
    </location>
</feature>
<feature type="topological domain" description="Vacuolar" evidence="1 6">
    <location>
        <begin position="32"/>
        <end position="369"/>
    </location>
</feature>
<feature type="transmembrane region" description="Helical; Name=2" evidence="3">
    <location>
        <begin position="370"/>
        <end position="390"/>
    </location>
</feature>
<feature type="topological domain" description="Cytoplasmic" evidence="1">
    <location>
        <begin position="391"/>
        <end position="423"/>
    </location>
</feature>
<feature type="transmembrane region" description="Helical; Name=3" evidence="3">
    <location>
        <begin position="424"/>
        <end position="444"/>
    </location>
</feature>
<feature type="topological domain" description="Vacuolar" evidence="1">
    <location>
        <begin position="445"/>
        <end position="450"/>
    </location>
</feature>
<feature type="transmembrane region" description="Helical; Name=4" evidence="3">
    <location>
        <begin position="451"/>
        <end position="471"/>
    </location>
</feature>
<feature type="topological domain" description="Cytoplasmic" evidence="1">
    <location>
        <begin position="472"/>
        <end position="490"/>
    </location>
</feature>
<feature type="transmembrane region" description="Helical; Name=5" evidence="3">
    <location>
        <begin position="491"/>
        <end position="511"/>
    </location>
</feature>
<feature type="topological domain" description="Vacuolar" evidence="1">
    <location>
        <begin position="512"/>
        <end position="521"/>
    </location>
</feature>
<feature type="transmembrane region" description="Helical; Name=6" evidence="3">
    <location>
        <begin position="522"/>
        <end position="542"/>
    </location>
</feature>
<feature type="topological domain" description="Cytoplasmic" evidence="1">
    <location>
        <begin position="543"/>
        <end position="642"/>
    </location>
</feature>
<feature type="transmembrane region" description="Helical; Name=7" evidence="3">
    <location>
        <begin position="643"/>
        <end position="663"/>
    </location>
</feature>
<feature type="topological domain" description="Vacuolar" evidence="1">
    <location>
        <begin position="664"/>
        <end position="685"/>
    </location>
</feature>
<feature type="transmembrane region" description="Helical; Name=8" evidence="3">
    <location>
        <begin position="686"/>
        <end position="706"/>
    </location>
</feature>
<feature type="topological domain" description="Cytoplasmic" evidence="1">
    <location>
        <begin position="707"/>
        <end position="713"/>
    </location>
</feature>
<feature type="transmembrane region" description="Helical; Name=9" evidence="3">
    <location>
        <begin position="714"/>
        <end position="734"/>
    </location>
</feature>
<feature type="topological domain" description="Vacuolar" evidence="1">
    <location>
        <begin position="735"/>
        <end position="957"/>
    </location>
</feature>
<feature type="region of interest" description="Disordered" evidence="5">
    <location>
        <begin position="559"/>
        <end position="586"/>
    </location>
</feature>
<feature type="region of interest" description="Disordered" evidence="5">
    <location>
        <begin position="603"/>
        <end position="627"/>
    </location>
</feature>
<feature type="compositionally biased region" description="Basic and acidic residues" evidence="5">
    <location>
        <begin position="603"/>
        <end position="613"/>
    </location>
</feature>
<feature type="active site" description="Proton acceptor" evidence="2">
    <location>
        <position position="198"/>
    </location>
</feature>
<feature type="binding site" evidence="2">
    <location>
        <position position="152"/>
    </location>
    <ligand>
        <name>Zn(2+)</name>
        <dbReference type="ChEBI" id="CHEBI:29105"/>
        <label>1</label>
        <note>catalytic</note>
    </ligand>
</feature>
<feature type="binding site" evidence="2">
    <location>
        <position position="164"/>
    </location>
    <ligand>
        <name>Zn(2+)</name>
        <dbReference type="ChEBI" id="CHEBI:29105"/>
        <label>1</label>
        <note>catalytic</note>
    </ligand>
</feature>
<feature type="binding site" evidence="2">
    <location>
        <position position="164"/>
    </location>
    <ligand>
        <name>Zn(2+)</name>
        <dbReference type="ChEBI" id="CHEBI:29105"/>
        <label>2</label>
        <note>catalytic</note>
    </ligand>
</feature>
<feature type="binding site" evidence="2">
    <location>
        <position position="199"/>
    </location>
    <ligand>
        <name>Zn(2+)</name>
        <dbReference type="ChEBI" id="CHEBI:29105"/>
        <label>2</label>
        <note>catalytic</note>
    </ligand>
</feature>
<feature type="binding site" evidence="2">
    <location>
        <position position="224"/>
    </location>
    <ligand>
        <name>Zn(2+)</name>
        <dbReference type="ChEBI" id="CHEBI:29105"/>
        <label>1</label>
        <note>catalytic</note>
    </ligand>
</feature>
<feature type="binding site" evidence="2">
    <location>
        <position position="297"/>
    </location>
    <ligand>
        <name>Zn(2+)</name>
        <dbReference type="ChEBI" id="CHEBI:29105"/>
        <label>2</label>
        <note>catalytic</note>
    </ligand>
</feature>
<feature type="site" description="Transition state stabilizer" evidence="2">
    <location>
        <position position="296"/>
    </location>
</feature>
<feature type="glycosylation site" description="N-linked (GlcNAc...) asparagine" evidence="4">
    <location>
        <position position="48"/>
    </location>
</feature>
<feature type="glycosylation site" description="N-linked (GlcNAc...) asparagine" evidence="4">
    <location>
        <position position="105"/>
    </location>
</feature>
<feature type="glycosylation site" description="N-linked (GlcNAc...) asparagine" evidence="4">
    <location>
        <position position="136"/>
    </location>
</feature>
<feature type="glycosylation site" description="N-linked (GlcNAc...) asparagine" evidence="4">
    <location>
        <position position="782"/>
    </location>
</feature>
<feature type="glycosylation site" description="N-linked (GlcNAc...) asparagine" evidence="4">
    <location>
        <position position="818"/>
    </location>
</feature>
<feature type="glycosylation site" description="N-linked (GlcNAc...) asparagine" evidence="4">
    <location>
        <position position="834"/>
    </location>
</feature>
<gene>
    <name type="ORF">PTT_06479</name>
</gene>
<name>PFF1_PYRTT</name>
<accession>E3RFJ1</accession>
<protein>
    <recommendedName>
        <fullName evidence="1">Vacuolar membrane protease</fullName>
        <ecNumber evidence="6">3.4.-.-</ecNumber>
    </recommendedName>
    <alternativeName>
        <fullName evidence="1">FXNA-related family protease 1</fullName>
    </alternativeName>
</protein>
<proteinExistence type="inferred from homology"/>
<reference key="1">
    <citation type="journal article" date="2010" name="Genome Biol.">
        <title>A first genome assembly of the barley fungal pathogen Pyrenophora teres f. teres.</title>
        <authorList>
            <person name="Ellwood S.R."/>
            <person name="Liu Z."/>
            <person name="Syme R.A."/>
            <person name="Lai Z."/>
            <person name="Hane J.K."/>
            <person name="Keiper F."/>
            <person name="Moffat C.S."/>
            <person name="Oliver R.P."/>
            <person name="Friesen T.L."/>
        </authorList>
    </citation>
    <scope>NUCLEOTIDE SEQUENCE [LARGE SCALE GENOMIC DNA]</scope>
    <source>
        <strain>0-1</strain>
    </source>
</reference>
<evidence type="ECO:0000250" key="1">
    <source>
        <dbReference type="UniProtKB" id="P38244"/>
    </source>
</evidence>
<evidence type="ECO:0000250" key="2">
    <source>
        <dbReference type="UniProtKB" id="P80561"/>
    </source>
</evidence>
<evidence type="ECO:0000255" key="3"/>
<evidence type="ECO:0000255" key="4">
    <source>
        <dbReference type="PROSITE-ProRule" id="PRU00498"/>
    </source>
</evidence>
<evidence type="ECO:0000256" key="5">
    <source>
        <dbReference type="SAM" id="MobiDB-lite"/>
    </source>
</evidence>
<evidence type="ECO:0000305" key="6"/>
<organism>
    <name type="scientific">Pyrenophora teres f. teres (strain 0-1)</name>
    <name type="common">Barley net blotch fungus</name>
    <name type="synonym">Drechslera teres f. teres</name>
    <dbReference type="NCBI Taxonomy" id="861557"/>
    <lineage>
        <taxon>Eukaryota</taxon>
        <taxon>Fungi</taxon>
        <taxon>Dikarya</taxon>
        <taxon>Ascomycota</taxon>
        <taxon>Pezizomycotina</taxon>
        <taxon>Dothideomycetes</taxon>
        <taxon>Pleosporomycetidae</taxon>
        <taxon>Pleosporales</taxon>
        <taxon>Pleosporineae</taxon>
        <taxon>Pleosporaceae</taxon>
        <taxon>Pyrenophora</taxon>
    </lineage>
</organism>
<comment type="function">
    <text evidence="1">May be involved in vacuolar sorting and osmoregulation.</text>
</comment>
<comment type="cofactor">
    <cofactor evidence="2">
        <name>Zn(2+)</name>
        <dbReference type="ChEBI" id="CHEBI:29105"/>
    </cofactor>
    <text evidence="2">Binds 2 Zn(2+) ions per subunit.</text>
</comment>
<comment type="subcellular location">
    <subcellularLocation>
        <location evidence="1">Vacuole membrane</location>
        <topology evidence="3">Multi-pass membrane protein</topology>
    </subcellularLocation>
</comment>
<comment type="similarity">
    <text evidence="6">Belongs to the peptidase M28 family.</text>
</comment>